<keyword id="KW-0137">Centromere</keyword>
<keyword id="KW-0158">Chromosome</keyword>
<keyword id="KW-0217">Developmental protein</keyword>
<keyword id="KW-1017">Isopeptide bond</keyword>
<keyword id="KW-0995">Kinetochore</keyword>
<keyword id="KW-0488">Methylation</keyword>
<keyword id="KW-0597">Phosphoprotein</keyword>
<keyword id="KW-1185">Reference proteome</keyword>
<keyword id="KW-0832">Ubl conjugation</keyword>
<name>CFDP1_MOUSE</name>
<proteinExistence type="evidence at protein level"/>
<feature type="chain" id="PRO_0000212495" description="Craniofacial development protein 1">
    <location>
        <begin position="1"/>
        <end position="295"/>
    </location>
</feature>
<feature type="domain" description="BCNT-C" evidence="3">
    <location>
        <begin position="214"/>
        <end position="295"/>
    </location>
</feature>
<feature type="region of interest" description="Disordered" evidence="4">
    <location>
        <begin position="1"/>
        <end position="153"/>
    </location>
</feature>
<feature type="region of interest" description="Hydrophilic">
    <location>
        <begin position="174"/>
        <end position="213"/>
    </location>
</feature>
<feature type="region of interest" description="Disordered" evidence="4">
    <location>
        <begin position="188"/>
        <end position="217"/>
    </location>
</feature>
<feature type="compositionally biased region" description="Acidic residues" evidence="4">
    <location>
        <begin position="1"/>
        <end position="18"/>
    </location>
</feature>
<feature type="compositionally biased region" description="Acidic residues" evidence="4">
    <location>
        <begin position="25"/>
        <end position="43"/>
    </location>
</feature>
<feature type="compositionally biased region" description="Basic residues" evidence="4">
    <location>
        <begin position="49"/>
        <end position="65"/>
    </location>
</feature>
<feature type="compositionally biased region" description="Basic and acidic residues" evidence="4">
    <location>
        <begin position="188"/>
        <end position="197"/>
    </location>
</feature>
<feature type="modified residue" description="Phosphoserine" evidence="1">
    <location>
        <position position="80"/>
    </location>
</feature>
<feature type="modified residue" description="Phosphoserine" evidence="1">
    <location>
        <position position="83"/>
    </location>
</feature>
<feature type="modified residue" description="Phosphoserine" evidence="1">
    <location>
        <position position="84"/>
    </location>
</feature>
<feature type="modified residue" description="Phosphoserine" evidence="10">
    <location>
        <position position="112"/>
    </location>
</feature>
<feature type="modified residue" description="Phosphoserine" evidence="2">
    <location>
        <position position="212"/>
    </location>
</feature>
<feature type="modified residue" description="N6-methyllysine" evidence="2">
    <location>
        <position position="215"/>
    </location>
</feature>
<feature type="modified residue" description="Phosphoserine" evidence="9 10">
    <location>
        <position position="246"/>
    </location>
</feature>
<feature type="cross-link" description="Glycyl lysine isopeptide (Lys-Gly) (interchain with G-Cter in SUMO2)" evidence="2">
    <location>
        <position position="146"/>
    </location>
</feature>
<feature type="sequence conflict" description="In Ref. 2; CAA69396." evidence="8" ref="2">
    <original>G</original>
    <variation>A</variation>
    <location>
        <position position="94"/>
    </location>
</feature>
<feature type="sequence conflict" description="In Ref. 2; CAA69396." evidence="8" ref="2">
    <original>K</original>
    <variation>E</variation>
    <location>
        <position position="264"/>
    </location>
</feature>
<protein>
    <recommendedName>
        <fullName>Craniofacial development protein 1</fullName>
    </recommendedName>
    <alternativeName>
        <fullName>27 kDa craniofacial protein</fullName>
    </alternativeName>
    <alternativeName>
        <fullName>Bucentaur</fullName>
    </alternativeName>
    <alternativeName>
        <fullName>Protein Cp27</fullName>
    </alternativeName>
</protein>
<dbReference type="EMBL" id="AB010828">
    <property type="protein sequence ID" value="BAA31696.1"/>
    <property type="molecule type" value="mRNA"/>
</dbReference>
<dbReference type="EMBL" id="Y08219">
    <property type="protein sequence ID" value="CAA69396.1"/>
    <property type="molecule type" value="mRNA"/>
</dbReference>
<dbReference type="EMBL" id="AK160532">
    <property type="protein sequence ID" value="BAE35849.1"/>
    <property type="molecule type" value="mRNA"/>
</dbReference>
<dbReference type="EMBL" id="AK133989">
    <property type="protein sequence ID" value="BAE21971.1"/>
    <property type="molecule type" value="mRNA"/>
</dbReference>
<dbReference type="EMBL" id="BC005589">
    <property type="protein sequence ID" value="AAH05589.1"/>
    <property type="molecule type" value="mRNA"/>
</dbReference>
<dbReference type="EMBL" id="AB033766">
    <property type="protein sequence ID" value="BAA94844.1"/>
    <property type="molecule type" value="Genomic_DNA"/>
</dbReference>
<dbReference type="CCDS" id="CCDS22680.1"/>
<dbReference type="RefSeq" id="NP_035931.1">
    <property type="nucleotide sequence ID" value="NM_011801.2"/>
</dbReference>
<dbReference type="SMR" id="O88271"/>
<dbReference type="BioGRID" id="204753">
    <property type="interactions" value="2"/>
</dbReference>
<dbReference type="FunCoup" id="O88271">
    <property type="interactions" value="2607"/>
</dbReference>
<dbReference type="IntAct" id="O88271">
    <property type="interactions" value="1"/>
</dbReference>
<dbReference type="MINT" id="O88271"/>
<dbReference type="STRING" id="10090.ENSMUSP00000034432"/>
<dbReference type="iPTMnet" id="O88271"/>
<dbReference type="PhosphoSitePlus" id="O88271"/>
<dbReference type="jPOST" id="O88271"/>
<dbReference type="PaxDb" id="10090-ENSMUSP00000034432"/>
<dbReference type="PeptideAtlas" id="O88271"/>
<dbReference type="ProteomicsDB" id="281115"/>
<dbReference type="Pumba" id="O88271"/>
<dbReference type="Antibodypedia" id="30309">
    <property type="antibodies" value="274 antibodies from 26 providers"/>
</dbReference>
<dbReference type="DNASU" id="23837"/>
<dbReference type="Ensembl" id="ENSMUST00000034432.7">
    <property type="protein sequence ID" value="ENSMUSP00000034432.6"/>
    <property type="gene ID" value="ENSMUSG00000031954.7"/>
</dbReference>
<dbReference type="GeneID" id="23837"/>
<dbReference type="KEGG" id="mmu:23837"/>
<dbReference type="UCSC" id="uc009nmx.1">
    <property type="organism name" value="mouse"/>
</dbReference>
<dbReference type="AGR" id="MGI:1344403"/>
<dbReference type="CTD" id="10428"/>
<dbReference type="MGI" id="MGI:1344403">
    <property type="gene designation" value="Cfdp1"/>
</dbReference>
<dbReference type="VEuPathDB" id="HostDB:ENSMUSG00000031954"/>
<dbReference type="eggNOG" id="KOG4776">
    <property type="taxonomic scope" value="Eukaryota"/>
</dbReference>
<dbReference type="GeneTree" id="ENSGT00390000018141"/>
<dbReference type="HOGENOM" id="CLU_080190_0_0_1"/>
<dbReference type="InParanoid" id="O88271"/>
<dbReference type="OMA" id="LDWAAYV"/>
<dbReference type="OrthoDB" id="445677at2759"/>
<dbReference type="PhylomeDB" id="O88271"/>
<dbReference type="TreeFam" id="TF313182"/>
<dbReference type="BioGRID-ORCS" id="23837">
    <property type="hits" value="19 hits in 77 CRISPR screens"/>
</dbReference>
<dbReference type="ChiTaRS" id="Cfdp1">
    <property type="organism name" value="mouse"/>
</dbReference>
<dbReference type="PRO" id="PR:O88271"/>
<dbReference type="Proteomes" id="UP000000589">
    <property type="component" value="Chromosome 8"/>
</dbReference>
<dbReference type="RNAct" id="O88271">
    <property type="molecule type" value="protein"/>
</dbReference>
<dbReference type="Bgee" id="ENSMUSG00000031954">
    <property type="expression patterns" value="Expressed in otic placode and 273 other cell types or tissues"/>
</dbReference>
<dbReference type="GO" id="GO:0005604">
    <property type="term" value="C:basement membrane"/>
    <property type="evidence" value="ECO:0000304"/>
    <property type="project" value="MGI"/>
</dbReference>
<dbReference type="GO" id="GO:0000776">
    <property type="term" value="C:kinetochore"/>
    <property type="evidence" value="ECO:0007669"/>
    <property type="project" value="UniProtKB-KW"/>
</dbReference>
<dbReference type="GO" id="GO:0007155">
    <property type="term" value="P:cell adhesion"/>
    <property type="evidence" value="ECO:0000314"/>
    <property type="project" value="MGI"/>
</dbReference>
<dbReference type="GO" id="GO:0044346">
    <property type="term" value="P:fibroblast apoptotic process"/>
    <property type="evidence" value="ECO:0000314"/>
    <property type="project" value="MGI"/>
</dbReference>
<dbReference type="GO" id="GO:2000270">
    <property type="term" value="P:negative regulation of fibroblast apoptotic process"/>
    <property type="evidence" value="ECO:0000314"/>
    <property type="project" value="MGI"/>
</dbReference>
<dbReference type="GO" id="GO:0042127">
    <property type="term" value="P:regulation of cell population proliferation"/>
    <property type="evidence" value="ECO:0000314"/>
    <property type="project" value="MGI"/>
</dbReference>
<dbReference type="GO" id="GO:0008360">
    <property type="term" value="P:regulation of cell shape"/>
    <property type="evidence" value="ECO:0000314"/>
    <property type="project" value="MGI"/>
</dbReference>
<dbReference type="InterPro" id="IPR011421">
    <property type="entry name" value="BCNT-C"/>
</dbReference>
<dbReference type="InterPro" id="IPR027124">
    <property type="entry name" value="Swc5/CFDP1/2"/>
</dbReference>
<dbReference type="PANTHER" id="PTHR48407">
    <property type="entry name" value="CRANIOFACIAL DEVELOPMENT PROTEIN 1"/>
    <property type="match status" value="1"/>
</dbReference>
<dbReference type="PANTHER" id="PTHR48407:SF1">
    <property type="entry name" value="CRANIOFACIAL DEVELOPMENT PROTEIN 1"/>
    <property type="match status" value="1"/>
</dbReference>
<dbReference type="Pfam" id="PF07572">
    <property type="entry name" value="BCNT"/>
    <property type="match status" value="1"/>
</dbReference>
<dbReference type="PROSITE" id="PS51279">
    <property type="entry name" value="BCNT_C"/>
    <property type="match status" value="1"/>
</dbReference>
<reference key="1">
    <citation type="journal article" date="1998" name="Gene">
        <title>Existence of a bovine LINE repetitive insert that appears in the cDNA of bovine protein BCNT in ruminant, but not in human, genomes.</title>
        <authorList>
            <person name="Takahashi I."/>
            <person name="Nobukuni T."/>
            <person name="Ohmori H."/>
            <person name="Kobayashi M."/>
            <person name="Tanaka S."/>
            <person name="Ohshima K."/>
            <person name="Okada N."/>
            <person name="Masui T."/>
            <person name="Hashimoto K."/>
            <person name="Iwashita S."/>
        </authorList>
    </citation>
    <scope>NUCLEOTIDE SEQUENCE [MRNA]</scope>
</reference>
<reference key="2">
    <citation type="journal article" date="1999" name="Gene">
        <title>Cloning, gene expression, and characterization of CP27, a novel gene in mouse embryogenesis.</title>
        <authorList>
            <person name="Diekwisch T.G.H."/>
            <person name="Marches F."/>
            <person name="Williams A."/>
            <person name="Luan X."/>
        </authorList>
    </citation>
    <scope>NUCLEOTIDE SEQUENCE [MRNA]</scope>
    <scope>FUNCTION</scope>
    <scope>TISSUE SPECIFICITY</scope>
    <scope>DEVELOPMENTAL STAGE</scope>
</reference>
<reference key="3">
    <citation type="journal article" date="2005" name="Science">
        <title>The transcriptional landscape of the mammalian genome.</title>
        <authorList>
            <person name="Carninci P."/>
            <person name="Kasukawa T."/>
            <person name="Katayama S."/>
            <person name="Gough J."/>
            <person name="Frith M.C."/>
            <person name="Maeda N."/>
            <person name="Oyama R."/>
            <person name="Ravasi T."/>
            <person name="Lenhard B."/>
            <person name="Wells C."/>
            <person name="Kodzius R."/>
            <person name="Shimokawa K."/>
            <person name="Bajic V.B."/>
            <person name="Brenner S.E."/>
            <person name="Batalov S."/>
            <person name="Forrest A.R."/>
            <person name="Zavolan M."/>
            <person name="Davis M.J."/>
            <person name="Wilming L.G."/>
            <person name="Aidinis V."/>
            <person name="Allen J.E."/>
            <person name="Ambesi-Impiombato A."/>
            <person name="Apweiler R."/>
            <person name="Aturaliya R.N."/>
            <person name="Bailey T.L."/>
            <person name="Bansal M."/>
            <person name="Baxter L."/>
            <person name="Beisel K.W."/>
            <person name="Bersano T."/>
            <person name="Bono H."/>
            <person name="Chalk A.M."/>
            <person name="Chiu K.P."/>
            <person name="Choudhary V."/>
            <person name="Christoffels A."/>
            <person name="Clutterbuck D.R."/>
            <person name="Crowe M.L."/>
            <person name="Dalla E."/>
            <person name="Dalrymple B.P."/>
            <person name="de Bono B."/>
            <person name="Della Gatta G."/>
            <person name="di Bernardo D."/>
            <person name="Down T."/>
            <person name="Engstrom P."/>
            <person name="Fagiolini M."/>
            <person name="Faulkner G."/>
            <person name="Fletcher C.F."/>
            <person name="Fukushima T."/>
            <person name="Furuno M."/>
            <person name="Futaki S."/>
            <person name="Gariboldi M."/>
            <person name="Georgii-Hemming P."/>
            <person name="Gingeras T.R."/>
            <person name="Gojobori T."/>
            <person name="Green R.E."/>
            <person name="Gustincich S."/>
            <person name="Harbers M."/>
            <person name="Hayashi Y."/>
            <person name="Hensch T.K."/>
            <person name="Hirokawa N."/>
            <person name="Hill D."/>
            <person name="Huminiecki L."/>
            <person name="Iacono M."/>
            <person name="Ikeo K."/>
            <person name="Iwama A."/>
            <person name="Ishikawa T."/>
            <person name="Jakt M."/>
            <person name="Kanapin A."/>
            <person name="Katoh M."/>
            <person name="Kawasawa Y."/>
            <person name="Kelso J."/>
            <person name="Kitamura H."/>
            <person name="Kitano H."/>
            <person name="Kollias G."/>
            <person name="Krishnan S.P."/>
            <person name="Kruger A."/>
            <person name="Kummerfeld S.K."/>
            <person name="Kurochkin I.V."/>
            <person name="Lareau L.F."/>
            <person name="Lazarevic D."/>
            <person name="Lipovich L."/>
            <person name="Liu J."/>
            <person name="Liuni S."/>
            <person name="McWilliam S."/>
            <person name="Madan Babu M."/>
            <person name="Madera M."/>
            <person name="Marchionni L."/>
            <person name="Matsuda H."/>
            <person name="Matsuzawa S."/>
            <person name="Miki H."/>
            <person name="Mignone F."/>
            <person name="Miyake S."/>
            <person name="Morris K."/>
            <person name="Mottagui-Tabar S."/>
            <person name="Mulder N."/>
            <person name="Nakano N."/>
            <person name="Nakauchi H."/>
            <person name="Ng P."/>
            <person name="Nilsson R."/>
            <person name="Nishiguchi S."/>
            <person name="Nishikawa S."/>
            <person name="Nori F."/>
            <person name="Ohara O."/>
            <person name="Okazaki Y."/>
            <person name="Orlando V."/>
            <person name="Pang K.C."/>
            <person name="Pavan W.J."/>
            <person name="Pavesi G."/>
            <person name="Pesole G."/>
            <person name="Petrovsky N."/>
            <person name="Piazza S."/>
            <person name="Reed J."/>
            <person name="Reid J.F."/>
            <person name="Ring B.Z."/>
            <person name="Ringwald M."/>
            <person name="Rost B."/>
            <person name="Ruan Y."/>
            <person name="Salzberg S.L."/>
            <person name="Sandelin A."/>
            <person name="Schneider C."/>
            <person name="Schoenbach C."/>
            <person name="Sekiguchi K."/>
            <person name="Semple C.A."/>
            <person name="Seno S."/>
            <person name="Sessa L."/>
            <person name="Sheng Y."/>
            <person name="Shibata Y."/>
            <person name="Shimada H."/>
            <person name="Shimada K."/>
            <person name="Silva D."/>
            <person name="Sinclair B."/>
            <person name="Sperling S."/>
            <person name="Stupka E."/>
            <person name="Sugiura K."/>
            <person name="Sultana R."/>
            <person name="Takenaka Y."/>
            <person name="Taki K."/>
            <person name="Tammoja K."/>
            <person name="Tan S.L."/>
            <person name="Tang S."/>
            <person name="Taylor M.S."/>
            <person name="Tegner J."/>
            <person name="Teichmann S.A."/>
            <person name="Ueda H.R."/>
            <person name="van Nimwegen E."/>
            <person name="Verardo R."/>
            <person name="Wei C.L."/>
            <person name="Yagi K."/>
            <person name="Yamanishi H."/>
            <person name="Zabarovsky E."/>
            <person name="Zhu S."/>
            <person name="Zimmer A."/>
            <person name="Hide W."/>
            <person name="Bult C."/>
            <person name="Grimmond S.M."/>
            <person name="Teasdale R.D."/>
            <person name="Liu E.T."/>
            <person name="Brusic V."/>
            <person name="Quackenbush J."/>
            <person name="Wahlestedt C."/>
            <person name="Mattick J.S."/>
            <person name="Hume D.A."/>
            <person name="Kai C."/>
            <person name="Sasaki D."/>
            <person name="Tomaru Y."/>
            <person name="Fukuda S."/>
            <person name="Kanamori-Katayama M."/>
            <person name="Suzuki M."/>
            <person name="Aoki J."/>
            <person name="Arakawa T."/>
            <person name="Iida J."/>
            <person name="Imamura K."/>
            <person name="Itoh M."/>
            <person name="Kato T."/>
            <person name="Kawaji H."/>
            <person name="Kawagashira N."/>
            <person name="Kawashima T."/>
            <person name="Kojima M."/>
            <person name="Kondo S."/>
            <person name="Konno H."/>
            <person name="Nakano K."/>
            <person name="Ninomiya N."/>
            <person name="Nishio T."/>
            <person name="Okada M."/>
            <person name="Plessy C."/>
            <person name="Shibata K."/>
            <person name="Shiraki T."/>
            <person name="Suzuki S."/>
            <person name="Tagami M."/>
            <person name="Waki K."/>
            <person name="Watahiki A."/>
            <person name="Okamura-Oho Y."/>
            <person name="Suzuki H."/>
            <person name="Kawai J."/>
            <person name="Hayashizaki Y."/>
        </authorList>
    </citation>
    <scope>NUCLEOTIDE SEQUENCE [LARGE SCALE MRNA]</scope>
</reference>
<reference key="4">
    <citation type="journal article" date="2004" name="Genome Res.">
        <title>The status, quality, and expansion of the NIH full-length cDNA project: the Mammalian Gene Collection (MGC).</title>
        <authorList>
            <consortium name="The MGC Project Team"/>
        </authorList>
    </citation>
    <scope>NUCLEOTIDE SEQUENCE [LARGE SCALE MRNA]</scope>
    <source>
        <strain>FVB/N</strain>
        <tissue>Mammary tumor</tissue>
    </source>
</reference>
<reference key="5">
    <citation type="journal article" date="2001" name="Gene">
        <title>Gene organization of bovine BCNT that contains a portion corresponding to an endonuclease domain derived from an RTE-1 (Bov-B LINE), non-LTR retrotransposable element: duplication of an intramolecular repeat unit downstream of the truncated RTE-1.</title>
        <authorList>
            <person name="Iwashita S."/>
            <person name="Itoh T."/>
            <person name="Takeda H."/>
            <person name="Sugimoto Y."/>
            <person name="Takahashi I."/>
            <person name="Nobukuni T."/>
            <person name="Sezaki M."/>
            <person name="Masui T."/>
            <person name="Hashimoto K."/>
        </authorList>
    </citation>
    <scope>NUCLEOTIDE SEQUENCE [GENOMIC DNA] OF 1-266</scope>
    <source>
        <strain>129/SvJ</strain>
    </source>
</reference>
<reference key="6">
    <citation type="journal article" date="2002" name="Gene">
        <title>CP27 function is necessary for cell survival and differentiation during tooth morphogenesis in organ culture.</title>
        <authorList>
            <person name="Diekwisch T.G.H."/>
            <person name="Luan X."/>
        </authorList>
    </citation>
    <scope>FUNCTION</scope>
</reference>
<reference key="7">
    <citation type="journal article" date="2002" name="Cell Prolif.">
        <title>CP27 affects viability, proliferation, attachment and gene expression in embryonic fibroblasts.</title>
        <authorList>
            <person name="Luan X."/>
            <person name="Diekwisch T.G.H."/>
        </authorList>
    </citation>
    <scope>FUNCTION</scope>
</reference>
<reference key="8">
    <citation type="journal article" date="2007" name="Proc. Natl. Acad. Sci. U.S.A.">
        <title>Large-scale phosphorylation analysis of mouse liver.</title>
        <authorList>
            <person name="Villen J."/>
            <person name="Beausoleil S.A."/>
            <person name="Gerber S.A."/>
            <person name="Gygi S.P."/>
        </authorList>
    </citation>
    <scope>PHOSPHORYLATION [LARGE SCALE ANALYSIS] AT SER-246</scope>
    <scope>IDENTIFICATION BY MASS SPECTROMETRY [LARGE SCALE ANALYSIS]</scope>
    <source>
        <tissue>Liver</tissue>
    </source>
</reference>
<reference key="9">
    <citation type="journal article" date="2010" name="Cell">
        <title>A tissue-specific atlas of mouse protein phosphorylation and expression.</title>
        <authorList>
            <person name="Huttlin E.L."/>
            <person name="Jedrychowski M.P."/>
            <person name="Elias J.E."/>
            <person name="Goswami T."/>
            <person name="Rad R."/>
            <person name="Beausoleil S.A."/>
            <person name="Villen J."/>
            <person name="Haas W."/>
            <person name="Sowa M.E."/>
            <person name="Gygi S.P."/>
        </authorList>
    </citation>
    <scope>PHOSPHORYLATION [LARGE SCALE ANALYSIS] AT SER-112 AND SER-246</scope>
    <scope>IDENTIFICATION BY MASS SPECTROMETRY [LARGE SCALE ANALYSIS]</scope>
    <source>
        <tissue>Brain</tissue>
        <tissue>Brown adipose tissue</tissue>
        <tissue>Kidney</tissue>
        <tissue>Lung</tissue>
        <tissue>Pancreas</tissue>
        <tissue>Spleen</tissue>
        <tissue>Testis</tissue>
    </source>
</reference>
<organism>
    <name type="scientific">Mus musculus</name>
    <name type="common">Mouse</name>
    <dbReference type="NCBI Taxonomy" id="10090"/>
    <lineage>
        <taxon>Eukaryota</taxon>
        <taxon>Metazoa</taxon>
        <taxon>Chordata</taxon>
        <taxon>Craniata</taxon>
        <taxon>Vertebrata</taxon>
        <taxon>Euteleostomi</taxon>
        <taxon>Mammalia</taxon>
        <taxon>Eutheria</taxon>
        <taxon>Euarchontoglires</taxon>
        <taxon>Glires</taxon>
        <taxon>Rodentia</taxon>
        <taxon>Myomorpha</taxon>
        <taxon>Muroidea</taxon>
        <taxon>Muridae</taxon>
        <taxon>Murinae</taxon>
        <taxon>Mus</taxon>
        <taxon>Mus</taxon>
    </lineage>
</organism>
<gene>
    <name type="primary">Cfdp1</name>
    <name type="synonym">Bcnt</name>
    <name type="synonym">Cfdp</name>
    <name type="synonym">Cp27</name>
</gene>
<comment type="function">
    <text evidence="5 6 7">May play a role during embryogenesis. May modulate tooth organogenesis since alterations of this protein function affect tooth organs size as well as individual cell fate and survival. In embryonic cells, blockage of the function results in increased number of apoptotic cells, reduced proliferation, alterations in cell shape and fibronection matrix synthesis.</text>
</comment>
<comment type="subcellular location">
    <subcellularLocation>
        <location evidence="2">Chromosome</location>
        <location evidence="2">Centromere</location>
        <location evidence="2">Kinetochore</location>
    </subcellularLocation>
</comment>
<comment type="tissue specificity">
    <text evidence="5">Expressed in lung, liver and heart, with higher expression in teeth.</text>
</comment>
<comment type="developmental stage">
    <text evidence="5">Detected at 8 dpc in developing organs, including brain, heart, lung and intestines. Expressed at 14 dpc and 16 dpc at the periphery of developing organs such as bones and teeth.</text>
</comment>
<sequence>MEEFDSEDFSTSDEDEDYLPSGGEYSEDDVNELVKEDEVDGEEQAEKTKGKRRKAQGIPARKRKQSGLLLEEEEDGKEDSGGSSSEEDEEEQEGGLGSENARKKKEDELWASFLNDVGPKSKAAPGSQTKVAEETEEISSNKPLVKADELDKPRESEKVKITKVFDFAGEEVRVTKEVDAASKEAKSFLKQTEREKPQALVTSPATPLPAGSGIKRASGMSSLLGKIGAKKQKMSTLEKSKLDWESFKEEEGIGEELAIHNRGKEGYIERKAFLDRVDHRQFEIERDLRLSKMKP</sequence>
<evidence type="ECO:0000250" key="1">
    <source>
        <dbReference type="UniProtKB" id="Q75UQ2"/>
    </source>
</evidence>
<evidence type="ECO:0000250" key="2">
    <source>
        <dbReference type="UniProtKB" id="Q9UEE9"/>
    </source>
</evidence>
<evidence type="ECO:0000255" key="3">
    <source>
        <dbReference type="PROSITE-ProRule" id="PRU00610"/>
    </source>
</evidence>
<evidence type="ECO:0000256" key="4">
    <source>
        <dbReference type="SAM" id="MobiDB-lite"/>
    </source>
</evidence>
<evidence type="ECO:0000269" key="5">
    <source>
    </source>
</evidence>
<evidence type="ECO:0000269" key="6">
    <source>
    </source>
</evidence>
<evidence type="ECO:0000269" key="7">
    <source>
    </source>
</evidence>
<evidence type="ECO:0000305" key="8"/>
<evidence type="ECO:0007744" key="9">
    <source>
    </source>
</evidence>
<evidence type="ECO:0007744" key="10">
    <source>
    </source>
</evidence>
<accession>O88271</accession>
<accession>O70565</accession>
<accession>Q9JMA5</accession>